<sequence>MARKRIAFIFTQGPHGSSAGREGLDALLATSALSEDIGVFFISDGVLQLLPQQQPEKILARNYIATFGVLPLYDVENCYLCERSLQQRGLSKMADWILDVTVLSPADLRRELGTYDVVLTF</sequence>
<organism>
    <name type="scientific">Yersinia pseudotuberculosis serotype I (strain IP32953)</name>
    <dbReference type="NCBI Taxonomy" id="273123"/>
    <lineage>
        <taxon>Bacteria</taxon>
        <taxon>Pseudomonadati</taxon>
        <taxon>Pseudomonadota</taxon>
        <taxon>Gammaproteobacteria</taxon>
        <taxon>Enterobacterales</taxon>
        <taxon>Yersiniaceae</taxon>
        <taxon>Yersinia</taxon>
    </lineage>
</organism>
<proteinExistence type="inferred from homology"/>
<protein>
    <recommendedName>
        <fullName evidence="1">Protein TusC</fullName>
    </recommendedName>
    <alternativeName>
        <fullName evidence="1">tRNA 2-thiouridine synthesizing protein C</fullName>
    </alternativeName>
</protein>
<name>TUSC_YERPS</name>
<feature type="chain" id="PRO_0000234461" description="Protein TusC">
    <location>
        <begin position="1"/>
        <end position="121"/>
    </location>
</feature>
<evidence type="ECO:0000255" key="1">
    <source>
        <dbReference type="HAMAP-Rule" id="MF_00389"/>
    </source>
</evidence>
<reference key="1">
    <citation type="journal article" date="2004" name="Proc. Natl. Acad. Sci. U.S.A.">
        <title>Insights into the evolution of Yersinia pestis through whole-genome comparison with Yersinia pseudotuberculosis.</title>
        <authorList>
            <person name="Chain P.S.G."/>
            <person name="Carniel E."/>
            <person name="Larimer F.W."/>
            <person name="Lamerdin J."/>
            <person name="Stoutland P.O."/>
            <person name="Regala W.M."/>
            <person name="Georgescu A.M."/>
            <person name="Vergez L.M."/>
            <person name="Land M.L."/>
            <person name="Motin V.L."/>
            <person name="Brubaker R.R."/>
            <person name="Fowler J."/>
            <person name="Hinnebusch J."/>
            <person name="Marceau M."/>
            <person name="Medigue C."/>
            <person name="Simonet M."/>
            <person name="Chenal-Francisque V."/>
            <person name="Souza B."/>
            <person name="Dacheux D."/>
            <person name="Elliott J.M."/>
            <person name="Derbise A."/>
            <person name="Hauser L.J."/>
            <person name="Garcia E."/>
        </authorList>
    </citation>
    <scope>NUCLEOTIDE SEQUENCE [LARGE SCALE GENOMIC DNA]</scope>
    <source>
        <strain>IP32953</strain>
    </source>
</reference>
<dbReference type="EMBL" id="BX936398">
    <property type="protein sequence ID" value="CAH22945.1"/>
    <property type="molecule type" value="Genomic_DNA"/>
</dbReference>
<dbReference type="RefSeq" id="WP_002212321.1">
    <property type="nucleotide sequence ID" value="NZ_CP009712.1"/>
</dbReference>
<dbReference type="SMR" id="Q664R2"/>
<dbReference type="GeneID" id="57974405"/>
<dbReference type="KEGG" id="ypo:BZ17_2880"/>
<dbReference type="KEGG" id="yps:YPTB3707"/>
<dbReference type="PATRIC" id="fig|273123.14.peg.3021"/>
<dbReference type="Proteomes" id="UP000001011">
    <property type="component" value="Chromosome"/>
</dbReference>
<dbReference type="GO" id="GO:0005737">
    <property type="term" value="C:cytoplasm"/>
    <property type="evidence" value="ECO:0007669"/>
    <property type="project" value="UniProtKB-SubCell"/>
</dbReference>
<dbReference type="GO" id="GO:0008033">
    <property type="term" value="P:tRNA processing"/>
    <property type="evidence" value="ECO:0007669"/>
    <property type="project" value="UniProtKB-UniRule"/>
</dbReference>
<dbReference type="Gene3D" id="3.40.1260.10">
    <property type="entry name" value="DsrEFH-like"/>
    <property type="match status" value="1"/>
</dbReference>
<dbReference type="HAMAP" id="MF_00389">
    <property type="entry name" value="Thiourid_synth_C"/>
    <property type="match status" value="1"/>
</dbReference>
<dbReference type="InterPro" id="IPR027396">
    <property type="entry name" value="DsrEFH-like"/>
</dbReference>
<dbReference type="InterPro" id="IPR003787">
    <property type="entry name" value="Sulphur_relay_DsrE/F-like"/>
</dbReference>
<dbReference type="InterPro" id="IPR037450">
    <property type="entry name" value="Sulphur_relay_TusC"/>
</dbReference>
<dbReference type="InterPro" id="IPR017462">
    <property type="entry name" value="Sulphur_relay_TusC/DsrF"/>
</dbReference>
<dbReference type="NCBIfam" id="NF001238">
    <property type="entry name" value="PRK00211.1"/>
    <property type="match status" value="1"/>
</dbReference>
<dbReference type="NCBIfam" id="TIGR03010">
    <property type="entry name" value="sulf_tusC_dsrF"/>
    <property type="match status" value="1"/>
</dbReference>
<dbReference type="PANTHER" id="PTHR38780">
    <property type="entry name" value="PROTEIN TUSC"/>
    <property type="match status" value="1"/>
</dbReference>
<dbReference type="PANTHER" id="PTHR38780:SF1">
    <property type="entry name" value="PROTEIN TUSC"/>
    <property type="match status" value="1"/>
</dbReference>
<dbReference type="Pfam" id="PF02635">
    <property type="entry name" value="DsrE"/>
    <property type="match status" value="1"/>
</dbReference>
<dbReference type="SUPFAM" id="SSF75169">
    <property type="entry name" value="DsrEFH-like"/>
    <property type="match status" value="1"/>
</dbReference>
<gene>
    <name evidence="1" type="primary">tusC</name>
    <name type="ordered locus">YPTB3707</name>
</gene>
<keyword id="KW-0963">Cytoplasm</keyword>
<keyword id="KW-0819">tRNA processing</keyword>
<accession>Q664R2</accession>
<comment type="function">
    <text evidence="1">Part of a sulfur-relay system required for 2-thiolation of 5-methylaminomethyl-2-thiouridine (mnm(5)s(2)U) at tRNA wobble positions.</text>
</comment>
<comment type="subunit">
    <text evidence="1">Heterohexamer, formed by a dimer of trimers. The hexameric TusBCD complex contains 2 copies each of TusB, TusC and TusD. The TusBCD complex interacts with TusE.</text>
</comment>
<comment type="subcellular location">
    <subcellularLocation>
        <location evidence="1">Cytoplasm</location>
    </subcellularLocation>
</comment>
<comment type="similarity">
    <text evidence="1">Belongs to the DsrF/TusC family.</text>
</comment>